<accession>O49515</accession>
<accession>Q6J9Q7</accession>
<feature type="chain" id="PRO_0000290412" description="Ethylene-responsive transcription factor ERF091">
    <location>
        <begin position="1"/>
        <end position="303"/>
    </location>
</feature>
<feature type="DNA-binding region" description="AP2/ERF" evidence="2">
    <location>
        <begin position="109"/>
        <end position="168"/>
    </location>
</feature>
<feature type="sequence conflict" description="In Ref. 2; AAT44935." evidence="4" ref="2">
    <original>L</original>
    <variation>P</variation>
    <location>
        <position position="9"/>
    </location>
</feature>
<feature type="sequence conflict" description="In Ref. 2; AAT44935." evidence="4" ref="2">
    <original>T</original>
    <variation>I</variation>
    <location>
        <position position="24"/>
    </location>
</feature>
<feature type="sequence conflict" description="In Ref. 2; AAT44935." evidence="4" ref="2">
    <original>Q</original>
    <variation>H</variation>
    <location>
        <position position="33"/>
    </location>
</feature>
<feature type="sequence conflict" description="In Ref. 2; AAT44935." evidence="4" ref="2">
    <original>I</original>
    <variation>K</variation>
    <location>
        <position position="50"/>
    </location>
</feature>
<feature type="sequence conflict" description="In Ref. 2; AAT44935." evidence="4" ref="2">
    <original>REMLQ</original>
    <variation>KERLP</variation>
    <location>
        <begin position="55"/>
        <end position="59"/>
    </location>
</feature>
<feature type="sequence conflict" description="In Ref. 2; AAT44935." evidence="4" ref="2">
    <original>T</original>
    <variation>M</variation>
    <location>
        <position position="65"/>
    </location>
</feature>
<feature type="sequence conflict" description="In Ref. 2; AAT44935." evidence="4" ref="2">
    <original>R</original>
    <variation>L</variation>
    <location>
        <position position="186"/>
    </location>
</feature>
<feature type="sequence conflict" description="In Ref. 2; AAT44935." evidence="4" ref="2">
    <original>IGL</original>
    <variation>SGWM</variation>
    <location>
        <begin position="202"/>
        <end position="204"/>
    </location>
</feature>
<feature type="sequence conflict" description="In Ref. 2; AAT44935." evidence="4" ref="2">
    <original>V</original>
    <variation>I</variation>
    <location>
        <position position="211"/>
    </location>
</feature>
<feature type="sequence conflict" description="In Ref. 2; AAT44935." evidence="4" ref="2">
    <original>H</original>
    <variation>Y</variation>
    <location>
        <position position="236"/>
    </location>
</feature>
<feature type="sequence conflict" description="In Ref. 2; AAT44935." evidence="4" ref="2">
    <original>R</original>
    <variation>C</variation>
    <location>
        <position position="240"/>
    </location>
</feature>
<comment type="function">
    <text evidence="1">Probably acts as a transcriptional activator. Binds to the GCC-box pathogenesis-related promoter element. May be involved in the regulation of gene expression by stress factors and by components of stress signal transduction pathways (By similarity).</text>
</comment>
<comment type="subunit">
    <text evidence="3">Interacts with MED25.</text>
</comment>
<comment type="subcellular location">
    <subcellularLocation>
        <location evidence="4">Nucleus</location>
    </subcellularLocation>
</comment>
<comment type="similarity">
    <text evidence="4">Belongs to the AP2/ERF transcription factor family. ERF subfamily.</text>
</comment>
<gene>
    <name type="primary">ERF091</name>
    <name type="ordered locus">At4g18450</name>
    <name type="ORF">F28J12.110</name>
</gene>
<evidence type="ECO:0000250" key="1"/>
<evidence type="ECO:0000255" key="2">
    <source>
        <dbReference type="PROSITE-ProRule" id="PRU00366"/>
    </source>
</evidence>
<evidence type="ECO:0000269" key="3">
    <source>
    </source>
</evidence>
<evidence type="ECO:0000305" key="4"/>
<name>ERF91_ARATH</name>
<organism>
    <name type="scientific">Arabidopsis thaliana</name>
    <name type="common">Mouse-ear cress</name>
    <dbReference type="NCBI Taxonomy" id="3702"/>
    <lineage>
        <taxon>Eukaryota</taxon>
        <taxon>Viridiplantae</taxon>
        <taxon>Streptophyta</taxon>
        <taxon>Embryophyta</taxon>
        <taxon>Tracheophyta</taxon>
        <taxon>Spermatophyta</taxon>
        <taxon>Magnoliopsida</taxon>
        <taxon>eudicotyledons</taxon>
        <taxon>Gunneridae</taxon>
        <taxon>Pentapetalae</taxon>
        <taxon>rosids</taxon>
        <taxon>malvids</taxon>
        <taxon>Brassicales</taxon>
        <taxon>Brassicaceae</taxon>
        <taxon>Camelineae</taxon>
        <taxon>Arabidopsis</taxon>
    </lineage>
</organism>
<keyword id="KW-0010">Activator</keyword>
<keyword id="KW-0238">DNA-binding</keyword>
<keyword id="KW-0936">Ethylene signaling pathway</keyword>
<keyword id="KW-0539">Nucleus</keyword>
<keyword id="KW-1185">Reference proteome</keyword>
<keyword id="KW-0804">Transcription</keyword>
<keyword id="KW-0805">Transcription regulation</keyword>
<reference key="1">
    <citation type="submission" date="2004-03" db="EMBL/GenBank/DDBJ databases">
        <title>Molecular cloning, expression, phylogenetic and functional characterization of the Arabidopsis AP2/EREBP transcription factor family.</title>
        <authorList>
            <person name="Pan Y."/>
            <person name="Gong W."/>
            <person name="Liu D."/>
            <person name="Fu Q."/>
            <person name="Mei W.-Q."/>
            <person name="Song W.-Q."/>
            <person name="Ma L.-G."/>
            <person name="Luo J.-C."/>
            <person name="Deng X.-W."/>
            <person name="Zhu Y.-X."/>
        </authorList>
    </citation>
    <scope>NUCLEOTIDE SEQUENCE [MRNA]</scope>
</reference>
<reference key="2">
    <citation type="journal article" date="1999" name="Nature">
        <title>Sequence and analysis of chromosome 4 of the plant Arabidopsis thaliana.</title>
        <authorList>
            <person name="Mayer K.F.X."/>
            <person name="Schueller C."/>
            <person name="Wambutt R."/>
            <person name="Murphy G."/>
            <person name="Volckaert G."/>
            <person name="Pohl T."/>
            <person name="Duesterhoeft A."/>
            <person name="Stiekema W."/>
            <person name="Entian K.-D."/>
            <person name="Terryn N."/>
            <person name="Harris B."/>
            <person name="Ansorge W."/>
            <person name="Brandt P."/>
            <person name="Grivell L.A."/>
            <person name="Rieger M."/>
            <person name="Weichselgartner M."/>
            <person name="de Simone V."/>
            <person name="Obermaier B."/>
            <person name="Mache R."/>
            <person name="Mueller M."/>
            <person name="Kreis M."/>
            <person name="Delseny M."/>
            <person name="Puigdomenech P."/>
            <person name="Watson M."/>
            <person name="Schmidtheini T."/>
            <person name="Reichert B."/>
            <person name="Portetelle D."/>
            <person name="Perez-Alonso M."/>
            <person name="Boutry M."/>
            <person name="Bancroft I."/>
            <person name="Vos P."/>
            <person name="Hoheisel J."/>
            <person name="Zimmermann W."/>
            <person name="Wedler H."/>
            <person name="Ridley P."/>
            <person name="Langham S.-A."/>
            <person name="McCullagh B."/>
            <person name="Bilham L."/>
            <person name="Robben J."/>
            <person name="van der Schueren J."/>
            <person name="Grymonprez B."/>
            <person name="Chuang Y.-J."/>
            <person name="Vandenbussche F."/>
            <person name="Braeken M."/>
            <person name="Weltjens I."/>
            <person name="Voet M."/>
            <person name="Bastiaens I."/>
            <person name="Aert R."/>
            <person name="Defoor E."/>
            <person name="Weitzenegger T."/>
            <person name="Bothe G."/>
            <person name="Ramsperger U."/>
            <person name="Hilbert H."/>
            <person name="Braun M."/>
            <person name="Holzer E."/>
            <person name="Brandt A."/>
            <person name="Peters S."/>
            <person name="van Staveren M."/>
            <person name="Dirkse W."/>
            <person name="Mooijman P."/>
            <person name="Klein Lankhorst R."/>
            <person name="Rose M."/>
            <person name="Hauf J."/>
            <person name="Koetter P."/>
            <person name="Berneiser S."/>
            <person name="Hempel S."/>
            <person name="Feldpausch M."/>
            <person name="Lamberth S."/>
            <person name="Van den Daele H."/>
            <person name="De Keyser A."/>
            <person name="Buysshaert C."/>
            <person name="Gielen J."/>
            <person name="Villarroel R."/>
            <person name="De Clercq R."/>
            <person name="van Montagu M."/>
            <person name="Rogers J."/>
            <person name="Cronin A."/>
            <person name="Quail M.A."/>
            <person name="Bray-Allen S."/>
            <person name="Clark L."/>
            <person name="Doggett J."/>
            <person name="Hall S."/>
            <person name="Kay M."/>
            <person name="Lennard N."/>
            <person name="McLay K."/>
            <person name="Mayes R."/>
            <person name="Pettett A."/>
            <person name="Rajandream M.A."/>
            <person name="Lyne M."/>
            <person name="Benes V."/>
            <person name="Rechmann S."/>
            <person name="Borkova D."/>
            <person name="Bloecker H."/>
            <person name="Scharfe M."/>
            <person name="Grimm M."/>
            <person name="Loehnert T.-H."/>
            <person name="Dose S."/>
            <person name="de Haan M."/>
            <person name="Maarse A.C."/>
            <person name="Schaefer M."/>
            <person name="Mueller-Auer S."/>
            <person name="Gabel C."/>
            <person name="Fuchs M."/>
            <person name="Fartmann B."/>
            <person name="Granderath K."/>
            <person name="Dauner D."/>
            <person name="Herzl A."/>
            <person name="Neumann S."/>
            <person name="Argiriou A."/>
            <person name="Vitale D."/>
            <person name="Liguori R."/>
            <person name="Piravandi E."/>
            <person name="Massenet O."/>
            <person name="Quigley F."/>
            <person name="Clabauld G."/>
            <person name="Muendlein A."/>
            <person name="Felber R."/>
            <person name="Schnabl S."/>
            <person name="Hiller R."/>
            <person name="Schmidt W."/>
            <person name="Lecharny A."/>
            <person name="Aubourg S."/>
            <person name="Chefdor F."/>
            <person name="Cooke R."/>
            <person name="Berger C."/>
            <person name="Monfort A."/>
            <person name="Casacuberta E."/>
            <person name="Gibbons T."/>
            <person name="Weber N."/>
            <person name="Vandenbol M."/>
            <person name="Bargues M."/>
            <person name="Terol J."/>
            <person name="Torres A."/>
            <person name="Perez-Perez A."/>
            <person name="Purnelle B."/>
            <person name="Bent E."/>
            <person name="Johnson S."/>
            <person name="Tacon D."/>
            <person name="Jesse T."/>
            <person name="Heijnen L."/>
            <person name="Schwarz S."/>
            <person name="Scholler P."/>
            <person name="Heber S."/>
            <person name="Francs P."/>
            <person name="Bielke C."/>
            <person name="Frishman D."/>
            <person name="Haase D."/>
            <person name="Lemcke K."/>
            <person name="Mewes H.-W."/>
            <person name="Stocker S."/>
            <person name="Zaccaria P."/>
            <person name="Bevan M."/>
            <person name="Wilson R.K."/>
            <person name="de la Bastide M."/>
            <person name="Habermann K."/>
            <person name="Parnell L."/>
            <person name="Dedhia N."/>
            <person name="Gnoj L."/>
            <person name="Schutz K."/>
            <person name="Huang E."/>
            <person name="Spiegel L."/>
            <person name="Sekhon M."/>
            <person name="Murray J."/>
            <person name="Sheet P."/>
            <person name="Cordes M."/>
            <person name="Abu-Threideh J."/>
            <person name="Stoneking T."/>
            <person name="Kalicki J."/>
            <person name="Graves T."/>
            <person name="Harmon G."/>
            <person name="Edwards J."/>
            <person name="Latreille P."/>
            <person name="Courtney L."/>
            <person name="Cloud J."/>
            <person name="Abbott A."/>
            <person name="Scott K."/>
            <person name="Johnson D."/>
            <person name="Minx P."/>
            <person name="Bentley D."/>
            <person name="Fulton B."/>
            <person name="Miller N."/>
            <person name="Greco T."/>
            <person name="Kemp K."/>
            <person name="Kramer J."/>
            <person name="Fulton L."/>
            <person name="Mardis E."/>
            <person name="Dante M."/>
            <person name="Pepin K."/>
            <person name="Hillier L.W."/>
            <person name="Nelson J."/>
            <person name="Spieth J."/>
            <person name="Ryan E."/>
            <person name="Andrews S."/>
            <person name="Geisel C."/>
            <person name="Layman D."/>
            <person name="Du H."/>
            <person name="Ali J."/>
            <person name="Berghoff A."/>
            <person name="Jones K."/>
            <person name="Drone K."/>
            <person name="Cotton M."/>
            <person name="Joshu C."/>
            <person name="Antonoiu B."/>
            <person name="Zidanic M."/>
            <person name="Strong C."/>
            <person name="Sun H."/>
            <person name="Lamar B."/>
            <person name="Yordan C."/>
            <person name="Ma P."/>
            <person name="Zhong J."/>
            <person name="Preston R."/>
            <person name="Vil D."/>
            <person name="Shekher M."/>
            <person name="Matero A."/>
            <person name="Shah R."/>
            <person name="Swaby I.K."/>
            <person name="O'Shaughnessy A."/>
            <person name="Rodriguez M."/>
            <person name="Hoffman J."/>
            <person name="Till S."/>
            <person name="Granat S."/>
            <person name="Shohdy N."/>
            <person name="Hasegawa A."/>
            <person name="Hameed A."/>
            <person name="Lodhi M."/>
            <person name="Johnson A."/>
            <person name="Chen E."/>
            <person name="Marra M.A."/>
            <person name="Martienssen R."/>
            <person name="McCombie W.R."/>
        </authorList>
    </citation>
    <scope>NUCLEOTIDE SEQUENCE [LARGE SCALE GENOMIC DNA]</scope>
    <source>
        <strain>cv. Columbia</strain>
    </source>
</reference>
<reference key="3">
    <citation type="journal article" date="2017" name="Plant J.">
        <title>Araport11: a complete reannotation of the Arabidopsis thaliana reference genome.</title>
        <authorList>
            <person name="Cheng C.Y."/>
            <person name="Krishnakumar V."/>
            <person name="Chan A.P."/>
            <person name="Thibaud-Nissen F."/>
            <person name="Schobel S."/>
            <person name="Town C.D."/>
        </authorList>
    </citation>
    <scope>GENOME REANNOTATION</scope>
    <source>
        <strain>cv. Columbia</strain>
    </source>
</reference>
<reference key="4">
    <citation type="journal article" date="2006" name="Plant Physiol.">
        <title>Genome-wide analysis of the ERF gene family in Arabidopsis and rice.</title>
        <authorList>
            <person name="Nakano T."/>
            <person name="Suzuki K."/>
            <person name="Fujimura T."/>
            <person name="Shinshi H."/>
        </authorList>
    </citation>
    <scope>GENE FAMILY</scope>
    <scope>NOMENCLATURE</scope>
</reference>
<reference key="5">
    <citation type="journal article" date="2011" name="Mol. Plant">
        <title>A high-throughput screening system for Arabidopsis transcription factors and its application to Med25-dependent transcriptional regulation.</title>
        <authorList>
            <person name="Ou B."/>
            <person name="Yin K.Q."/>
            <person name="Liu S.N."/>
            <person name="Yang Y."/>
            <person name="Gu T."/>
            <person name="Wing Hui J.M."/>
            <person name="Zhang L."/>
            <person name="Miao J."/>
            <person name="Kondou Y."/>
            <person name="Matsui M."/>
            <person name="Gu H.Y."/>
            <person name="Qu L.J."/>
        </authorList>
    </citation>
    <scope>INTERACTION WITH MED25</scope>
</reference>
<protein>
    <recommendedName>
        <fullName>Ethylene-responsive transcription factor ERF091</fullName>
    </recommendedName>
</protein>
<sequence length="303" mass="34495">MAFGNIQELDGEILKNVWANYIGTPQTDTRSIQVPEVSRTWEALPTLDDIPEGSREMLQSLDMSTEDQEWTEILDAIASFPNKTNHDPLTNPTIDSCSLSSRVSCKTRKYRGVRKRPWGKFAAEIRDSTRNGVRVWLGTFQTAEEAAMAYDKAAVRIRGTQKAHTNFQLETVIKAMEMDCNPNYYRMNNSNTSDPLRSSRKIGLRTGKEAVKAYDEVVDGMVENHCALSYCSTKEHSETRGLRGSEETWFDLRKRRRSNEDSMCQEVEMQKTVTGEETVCDVFGLFEFEDLGSDYLETLLSSF</sequence>
<dbReference type="EMBL" id="AY560868">
    <property type="protein sequence ID" value="AAT44935.1"/>
    <property type="molecule type" value="mRNA"/>
</dbReference>
<dbReference type="EMBL" id="AL021710">
    <property type="protein sequence ID" value="CAA16725.1"/>
    <property type="molecule type" value="Genomic_DNA"/>
</dbReference>
<dbReference type="EMBL" id="AL161548">
    <property type="protein sequence ID" value="CAB78847.1"/>
    <property type="molecule type" value="Genomic_DNA"/>
</dbReference>
<dbReference type="EMBL" id="CP002687">
    <property type="protein sequence ID" value="AEE84047.1"/>
    <property type="molecule type" value="Genomic_DNA"/>
</dbReference>
<dbReference type="PIR" id="T04541">
    <property type="entry name" value="T04541"/>
</dbReference>
<dbReference type="RefSeq" id="NP_193580.1">
    <property type="nucleotide sequence ID" value="NM_117958.2"/>
</dbReference>
<dbReference type="SMR" id="O49515"/>
<dbReference type="BioGRID" id="12869">
    <property type="interactions" value="2"/>
</dbReference>
<dbReference type="FunCoup" id="O49515">
    <property type="interactions" value="31"/>
</dbReference>
<dbReference type="IntAct" id="O49515">
    <property type="interactions" value="2"/>
</dbReference>
<dbReference type="STRING" id="3702.O49515"/>
<dbReference type="PaxDb" id="3702-AT4G18450.1"/>
<dbReference type="EnsemblPlants" id="AT4G18450.1">
    <property type="protein sequence ID" value="AT4G18450.1"/>
    <property type="gene ID" value="AT4G18450"/>
</dbReference>
<dbReference type="GeneID" id="827576"/>
<dbReference type="Gramene" id="AT4G18450.1">
    <property type="protein sequence ID" value="AT4G18450.1"/>
    <property type="gene ID" value="AT4G18450"/>
</dbReference>
<dbReference type="KEGG" id="ath:AT4G18450"/>
<dbReference type="Araport" id="AT4G18450"/>
<dbReference type="TAIR" id="AT4G18450"/>
<dbReference type="eggNOG" id="ENOG502RRHE">
    <property type="taxonomic scope" value="Eukaryota"/>
</dbReference>
<dbReference type="HOGENOM" id="CLU_058713_2_0_1"/>
<dbReference type="InParanoid" id="O49515"/>
<dbReference type="OMA" id="AHTNFQL"/>
<dbReference type="PhylomeDB" id="O49515"/>
<dbReference type="PRO" id="PR:O49515"/>
<dbReference type="Proteomes" id="UP000006548">
    <property type="component" value="Chromosome 4"/>
</dbReference>
<dbReference type="ExpressionAtlas" id="O49515">
    <property type="expression patterns" value="baseline and differential"/>
</dbReference>
<dbReference type="GO" id="GO:0005634">
    <property type="term" value="C:nucleus"/>
    <property type="evidence" value="ECO:0007669"/>
    <property type="project" value="UniProtKB-SubCell"/>
</dbReference>
<dbReference type="GO" id="GO:0003700">
    <property type="term" value="F:DNA-binding transcription factor activity"/>
    <property type="evidence" value="ECO:0000250"/>
    <property type="project" value="TAIR"/>
</dbReference>
<dbReference type="GO" id="GO:0000976">
    <property type="term" value="F:transcription cis-regulatory region binding"/>
    <property type="evidence" value="ECO:0000353"/>
    <property type="project" value="TAIR"/>
</dbReference>
<dbReference type="GO" id="GO:0009873">
    <property type="term" value="P:ethylene-activated signaling pathway"/>
    <property type="evidence" value="ECO:0000304"/>
    <property type="project" value="TAIR"/>
</dbReference>
<dbReference type="CDD" id="cd00018">
    <property type="entry name" value="AP2"/>
    <property type="match status" value="1"/>
</dbReference>
<dbReference type="FunFam" id="3.30.730.10:FF:000001">
    <property type="entry name" value="Ethylene-responsive transcription factor 2"/>
    <property type="match status" value="1"/>
</dbReference>
<dbReference type="Gene3D" id="3.30.730.10">
    <property type="entry name" value="AP2/ERF domain"/>
    <property type="match status" value="1"/>
</dbReference>
<dbReference type="InterPro" id="IPR001471">
    <property type="entry name" value="AP2/ERF_dom"/>
</dbReference>
<dbReference type="InterPro" id="IPR036955">
    <property type="entry name" value="AP2/ERF_dom_sf"/>
</dbReference>
<dbReference type="InterPro" id="IPR016177">
    <property type="entry name" value="DNA-bd_dom_sf"/>
</dbReference>
<dbReference type="InterPro" id="IPR044808">
    <property type="entry name" value="ERF_plant"/>
</dbReference>
<dbReference type="PANTHER" id="PTHR31190">
    <property type="entry name" value="DNA-BINDING DOMAIN"/>
    <property type="match status" value="1"/>
</dbReference>
<dbReference type="PANTHER" id="PTHR31190:SF473">
    <property type="entry name" value="OS05G0437100 PROTEIN"/>
    <property type="match status" value="1"/>
</dbReference>
<dbReference type="Pfam" id="PF00847">
    <property type="entry name" value="AP2"/>
    <property type="match status" value="1"/>
</dbReference>
<dbReference type="PRINTS" id="PR00367">
    <property type="entry name" value="ETHRSPELEMNT"/>
</dbReference>
<dbReference type="SMART" id="SM00380">
    <property type="entry name" value="AP2"/>
    <property type="match status" value="1"/>
</dbReference>
<dbReference type="SUPFAM" id="SSF54171">
    <property type="entry name" value="DNA-binding domain"/>
    <property type="match status" value="1"/>
</dbReference>
<dbReference type="PROSITE" id="PS51032">
    <property type="entry name" value="AP2_ERF"/>
    <property type="match status" value="1"/>
</dbReference>
<proteinExistence type="evidence at protein level"/>